<feature type="chain" id="PRO_0000319346" description="Cellulose synthase-like protein D1">
    <location>
        <begin position="1"/>
        <end position="1036"/>
    </location>
</feature>
<feature type="transmembrane region" description="Helical" evidence="1">
    <location>
        <begin position="178"/>
        <end position="198"/>
    </location>
</feature>
<feature type="transmembrane region" description="Helical" evidence="1">
    <location>
        <begin position="208"/>
        <end position="228"/>
    </location>
</feature>
<feature type="transmembrane region" description="Helical" evidence="1">
    <location>
        <begin position="817"/>
        <end position="837"/>
    </location>
</feature>
<feature type="transmembrane region" description="Helical" evidence="1">
    <location>
        <begin position="848"/>
        <end position="868"/>
    </location>
</feature>
<feature type="transmembrane region" description="Helical" evidence="1">
    <location>
        <begin position="895"/>
        <end position="915"/>
    </location>
</feature>
<feature type="transmembrane region" description="Helical" evidence="1">
    <location>
        <begin position="938"/>
        <end position="958"/>
    </location>
</feature>
<feature type="transmembrane region" description="Helical" evidence="1">
    <location>
        <begin position="962"/>
        <end position="982"/>
    </location>
</feature>
<feature type="transmembrane region" description="Helical" evidence="1">
    <location>
        <begin position="1002"/>
        <end position="1022"/>
    </location>
</feature>
<feature type="region of interest" description="Disordered" evidence="2">
    <location>
        <begin position="1"/>
        <end position="99"/>
    </location>
</feature>
<feature type="region of interest" description="Disordered" evidence="2">
    <location>
        <begin position="626"/>
        <end position="665"/>
    </location>
</feature>
<feature type="compositionally biased region" description="Polar residues" evidence="2">
    <location>
        <begin position="9"/>
        <end position="19"/>
    </location>
</feature>
<feature type="compositionally biased region" description="Polar residues" evidence="2">
    <location>
        <begin position="69"/>
        <end position="80"/>
    </location>
</feature>
<feature type="compositionally biased region" description="Gly residues" evidence="2">
    <location>
        <begin position="86"/>
        <end position="95"/>
    </location>
</feature>
<feature type="compositionally biased region" description="Low complexity" evidence="2">
    <location>
        <begin position="631"/>
        <end position="642"/>
    </location>
</feature>
<feature type="active site" evidence="1">
    <location>
        <position position="308"/>
    </location>
</feature>
<feature type="active site" evidence="1">
    <location>
        <position position="741"/>
    </location>
</feature>
<feature type="sequence conflict" description="In Ref. 3; BAD43631." evidence="3" ref="3">
    <original>R</original>
    <variation>Q</variation>
    <location>
        <position position="996"/>
    </location>
</feature>
<comment type="function">
    <text>Thought to be a Golgi-localized beta-glycan synthase that polymerize the backbones of noncellulosic polysaccharides (hemicelluloses) of plant cell wall.</text>
</comment>
<comment type="subcellular location">
    <subcellularLocation>
        <location evidence="3">Golgi apparatus membrane</location>
        <topology evidence="3">Multi-pass membrane protein</topology>
    </subcellularLocation>
</comment>
<comment type="similarity">
    <text evidence="3">Belongs to the glycosyltransferase 2 family. Plant cellulose synthase-like D subfamily.</text>
</comment>
<dbReference type="EC" id="2.4.1.-"/>
<dbReference type="EMBL" id="AC002334">
    <property type="protein sequence ID" value="AAC04910.1"/>
    <property type="molecule type" value="Genomic_DNA"/>
</dbReference>
<dbReference type="EMBL" id="CP002685">
    <property type="protein sequence ID" value="AEC08785.1"/>
    <property type="molecule type" value="Genomic_DNA"/>
</dbReference>
<dbReference type="EMBL" id="CP002685">
    <property type="protein sequence ID" value="ANM62806.1"/>
    <property type="molecule type" value="Genomic_DNA"/>
</dbReference>
<dbReference type="EMBL" id="AK175868">
    <property type="protein sequence ID" value="BAD43631.1"/>
    <property type="molecule type" value="mRNA"/>
</dbReference>
<dbReference type="PIR" id="D84741">
    <property type="entry name" value="D84741"/>
</dbReference>
<dbReference type="RefSeq" id="NP_001324935.1">
    <property type="nucleotide sequence ID" value="NM_001336422.1"/>
</dbReference>
<dbReference type="RefSeq" id="NP_180869.1">
    <property type="nucleotide sequence ID" value="NM_128870.4"/>
</dbReference>
<dbReference type="SMR" id="O49323"/>
<dbReference type="FunCoup" id="O49323">
    <property type="interactions" value="2"/>
</dbReference>
<dbReference type="STRING" id="3702.O49323"/>
<dbReference type="CAZy" id="GT2">
    <property type="family name" value="Glycosyltransferase Family 2"/>
</dbReference>
<dbReference type="iPTMnet" id="O49323"/>
<dbReference type="SwissPalm" id="O49323"/>
<dbReference type="PaxDb" id="3702-AT2G33100.1"/>
<dbReference type="ProteomicsDB" id="224538"/>
<dbReference type="EnsemblPlants" id="AT2G33100.1">
    <property type="protein sequence ID" value="AT2G33100.1"/>
    <property type="gene ID" value="AT2G33100"/>
</dbReference>
<dbReference type="EnsemblPlants" id="AT2G33100.2">
    <property type="protein sequence ID" value="AT2G33100.2"/>
    <property type="gene ID" value="AT2G33100"/>
</dbReference>
<dbReference type="GeneID" id="817872"/>
<dbReference type="Gramene" id="AT2G33100.1">
    <property type="protein sequence ID" value="AT2G33100.1"/>
    <property type="gene ID" value="AT2G33100"/>
</dbReference>
<dbReference type="Gramene" id="AT2G33100.2">
    <property type="protein sequence ID" value="AT2G33100.2"/>
    <property type="gene ID" value="AT2G33100"/>
</dbReference>
<dbReference type="KEGG" id="ath:AT2G33100"/>
<dbReference type="Araport" id="AT2G33100"/>
<dbReference type="TAIR" id="AT2G33100">
    <property type="gene designation" value="CSLD1"/>
</dbReference>
<dbReference type="eggNOG" id="ENOG502QQH4">
    <property type="taxonomic scope" value="Eukaryota"/>
</dbReference>
<dbReference type="HOGENOM" id="CLU_001418_3_1_1"/>
<dbReference type="InParanoid" id="O49323"/>
<dbReference type="OMA" id="IMSKVPD"/>
<dbReference type="PhylomeDB" id="O49323"/>
<dbReference type="BioCyc" id="ARA:AT2G33100-MONOMER"/>
<dbReference type="PRO" id="PR:O49323"/>
<dbReference type="Proteomes" id="UP000006548">
    <property type="component" value="Chromosome 2"/>
</dbReference>
<dbReference type="ExpressionAtlas" id="O49323">
    <property type="expression patterns" value="baseline and differential"/>
</dbReference>
<dbReference type="GO" id="GO:0000139">
    <property type="term" value="C:Golgi membrane"/>
    <property type="evidence" value="ECO:0007669"/>
    <property type="project" value="UniProtKB-SubCell"/>
</dbReference>
<dbReference type="GO" id="GO:0016760">
    <property type="term" value="F:cellulose synthase (UDP-forming) activity"/>
    <property type="evidence" value="ECO:0007669"/>
    <property type="project" value="InterPro"/>
</dbReference>
<dbReference type="GO" id="GO:0071555">
    <property type="term" value="P:cell wall organization"/>
    <property type="evidence" value="ECO:0007669"/>
    <property type="project" value="UniProtKB-KW"/>
</dbReference>
<dbReference type="GO" id="GO:0030244">
    <property type="term" value="P:cellulose biosynthetic process"/>
    <property type="evidence" value="ECO:0007669"/>
    <property type="project" value="InterPro"/>
</dbReference>
<dbReference type="GO" id="GO:0009846">
    <property type="term" value="P:pollen germination"/>
    <property type="evidence" value="ECO:0000315"/>
    <property type="project" value="TAIR"/>
</dbReference>
<dbReference type="FunFam" id="3.90.550.10:FF:000027">
    <property type="entry name" value="Cellulose synthase-like protein D4"/>
    <property type="match status" value="1"/>
</dbReference>
<dbReference type="Gene3D" id="3.90.550.10">
    <property type="entry name" value="Spore Coat Polysaccharide Biosynthesis Protein SpsA, Chain A"/>
    <property type="match status" value="1"/>
</dbReference>
<dbReference type="InterPro" id="IPR005150">
    <property type="entry name" value="Cellulose_synth"/>
</dbReference>
<dbReference type="InterPro" id="IPR029044">
    <property type="entry name" value="Nucleotide-diphossugar_trans"/>
</dbReference>
<dbReference type="PANTHER" id="PTHR13301">
    <property type="entry name" value="X-BOX TRANSCRIPTION FACTOR-RELATED"/>
    <property type="match status" value="1"/>
</dbReference>
<dbReference type="Pfam" id="PF03552">
    <property type="entry name" value="Cellulose_synt"/>
    <property type="match status" value="1"/>
</dbReference>
<dbReference type="SUPFAM" id="SSF53448">
    <property type="entry name" value="Nucleotide-diphospho-sugar transferases"/>
    <property type="match status" value="1"/>
</dbReference>
<gene>
    <name type="primary">CSLD1</name>
    <name type="ordered locus">At2g33100</name>
    <name type="ORF">F25I18.16</name>
</gene>
<reference key="1">
    <citation type="journal article" date="1999" name="Nature">
        <title>Sequence and analysis of chromosome 2 of the plant Arabidopsis thaliana.</title>
        <authorList>
            <person name="Lin X."/>
            <person name="Kaul S."/>
            <person name="Rounsley S.D."/>
            <person name="Shea T.P."/>
            <person name="Benito M.-I."/>
            <person name="Town C.D."/>
            <person name="Fujii C.Y."/>
            <person name="Mason T.M."/>
            <person name="Bowman C.L."/>
            <person name="Barnstead M.E."/>
            <person name="Feldblyum T.V."/>
            <person name="Buell C.R."/>
            <person name="Ketchum K.A."/>
            <person name="Lee J.J."/>
            <person name="Ronning C.M."/>
            <person name="Koo H.L."/>
            <person name="Moffat K.S."/>
            <person name="Cronin L.A."/>
            <person name="Shen M."/>
            <person name="Pai G."/>
            <person name="Van Aken S."/>
            <person name="Umayam L."/>
            <person name="Tallon L.J."/>
            <person name="Gill J.E."/>
            <person name="Adams M.D."/>
            <person name="Carrera A.J."/>
            <person name="Creasy T.H."/>
            <person name="Goodman H.M."/>
            <person name="Somerville C.R."/>
            <person name="Copenhaver G.P."/>
            <person name="Preuss D."/>
            <person name="Nierman W.C."/>
            <person name="White O."/>
            <person name="Eisen J.A."/>
            <person name="Salzberg S.L."/>
            <person name="Fraser C.M."/>
            <person name="Venter J.C."/>
        </authorList>
    </citation>
    <scope>NUCLEOTIDE SEQUENCE [LARGE SCALE GENOMIC DNA]</scope>
    <source>
        <strain>cv. Columbia</strain>
    </source>
</reference>
<reference key="2">
    <citation type="journal article" date="2017" name="Plant J.">
        <title>Araport11: a complete reannotation of the Arabidopsis thaliana reference genome.</title>
        <authorList>
            <person name="Cheng C.Y."/>
            <person name="Krishnakumar V."/>
            <person name="Chan A.P."/>
            <person name="Thibaud-Nissen F."/>
            <person name="Schobel S."/>
            <person name="Town C.D."/>
        </authorList>
    </citation>
    <scope>GENOME REANNOTATION</scope>
    <source>
        <strain>cv. Columbia</strain>
    </source>
</reference>
<reference key="3">
    <citation type="submission" date="2004-09" db="EMBL/GenBank/DDBJ databases">
        <title>Large-scale analysis of RIKEN Arabidopsis full-length (RAFL) cDNAs.</title>
        <authorList>
            <person name="Totoki Y."/>
            <person name="Seki M."/>
            <person name="Ishida J."/>
            <person name="Nakajima M."/>
            <person name="Enju A."/>
            <person name="Kamiya A."/>
            <person name="Narusaka M."/>
            <person name="Shin-i T."/>
            <person name="Nakagawa M."/>
            <person name="Sakamoto N."/>
            <person name="Oishi K."/>
            <person name="Kohara Y."/>
            <person name="Kobayashi M."/>
            <person name="Toyoda A."/>
            <person name="Sakaki Y."/>
            <person name="Sakurai T."/>
            <person name="Iida K."/>
            <person name="Akiyama K."/>
            <person name="Satou M."/>
            <person name="Toyoda T."/>
            <person name="Konagaya A."/>
            <person name="Carninci P."/>
            <person name="Kawai J."/>
            <person name="Hayashizaki Y."/>
            <person name="Shinozaki K."/>
        </authorList>
    </citation>
    <scope>NUCLEOTIDE SEQUENCE [LARGE SCALE MRNA] OF 216-1036</scope>
    <source>
        <strain>cv. Columbia</strain>
    </source>
</reference>
<reference key="4">
    <citation type="journal article" date="2000" name="Plant Physiol.">
        <title>The cellulose synthase superfamily.</title>
        <authorList>
            <person name="Richmond T.A."/>
            <person name="Somerville C.R."/>
        </authorList>
    </citation>
    <scope>GENE FAMILY</scope>
    <scope>NOMENCLATURE</scope>
</reference>
<proteinExistence type="evidence at transcript level"/>
<organism>
    <name type="scientific">Arabidopsis thaliana</name>
    <name type="common">Mouse-ear cress</name>
    <dbReference type="NCBI Taxonomy" id="3702"/>
    <lineage>
        <taxon>Eukaryota</taxon>
        <taxon>Viridiplantae</taxon>
        <taxon>Streptophyta</taxon>
        <taxon>Embryophyta</taxon>
        <taxon>Tracheophyta</taxon>
        <taxon>Spermatophyta</taxon>
        <taxon>Magnoliopsida</taxon>
        <taxon>eudicotyledons</taxon>
        <taxon>Gunneridae</taxon>
        <taxon>Pentapetalae</taxon>
        <taxon>rosids</taxon>
        <taxon>malvids</taxon>
        <taxon>Brassicales</taxon>
        <taxon>Brassicaceae</taxon>
        <taxon>Camelineae</taxon>
        <taxon>Arabidopsis</taxon>
    </lineage>
</organism>
<keyword id="KW-0961">Cell wall biogenesis/degradation</keyword>
<keyword id="KW-0328">Glycosyltransferase</keyword>
<keyword id="KW-0333">Golgi apparatus</keyword>
<keyword id="KW-0472">Membrane</keyword>
<keyword id="KW-1185">Reference proteome</keyword>
<keyword id="KW-0808">Transferase</keyword>
<keyword id="KW-0812">Transmembrane</keyword>
<keyword id="KW-1133">Transmembrane helix</keyword>
<name>CSLD1_ARATH</name>
<accession>O49323</accession>
<accession>Q680J9</accession>
<protein>
    <recommendedName>
        <fullName>Cellulose synthase-like protein D1</fullName>
        <shortName>AtCslD1</shortName>
        <ecNumber>2.4.1.-</ecNumber>
    </recommendedName>
</protein>
<sequence>MASSPPKKTLNSQSSSLSRPPQAVKFGRRTSSGRIVSLSRDDDMDVSGDYSGQNDYINYTVLMPPTPDNQPAGSSGSTSESKGDANRGGGGGDGPKMGNKLERRLSVMKSNNKSMLLRSQTGDFDHNRWLFESKGKYGIGNAFWSEEDDTYDGGVSKSDFLDKPWKPLTRKVQIPAKILSPYRLLIVIRLVIVFFFLWWRITNPNEDAMWLWGLSIVCEIWFAFSWILDILPKLNPINRATDLAALHDKFEQPSPSNPTGRSDLPGVDVFVSTADPEKEPPLVTANTLLSILAVDYPIEKLSAYISDDGGAILTFEAMAEAVRFAEYWVPFCRKHDIEPRNPDSYFSIKKDPTKNKKRQDFVKDRRWIKREYDEFKVRINGLPEQIKKRAEQFNMREELKEKRIAREKNGGVLPPDGVEVVKATWMADGTHWPGTWFEPKPDHSKGDHAGILQIMSKVPDLEPVMGGPNEGALDFTGIDIRVPMFAYVSREKRPGFDHNKKAGAMNGMVRASAILSNGAFILNLDCDHYIYNSKAIKEGMCFMMDRGGDRICYIQFPQRFEGIDPSDRYANHNTVFFDGNMRALDGLQGPVYVGTGCMFRRYALYGFNPPRANEYSGVFGQEKAPAMHVRTQSQASQTSQASDLESDTQPLNDDPDLGLPKKFGNSTMFTDTIPVAEYQGRPLADHMSVKNGRPPGALLLPRPPLDAPTVAEAIAVISCWYEDNTEWGDRIGWIYGSVTEDVVTGYRMHNRGWRSVYCITKRDAFRGTAPINLTDRLHQVLRWATGSVEIFFSKNNAMFATRRLKFLQRVAYLNVGIYPFTSIFLVVYCFLPALCLFSGKFIVQSLDIHFLSYLLCITVTLTLISLLEVKWSGIGLEEWWRNEQFWLIGGTSAHLAAVVQGLLKVIAGIEISFTLTSKASGEDEDDIFADLYIVKWTGLFIMPLTIIIVNLVAIVIGASRTIYSVIPQWGKLMGGIFFSLWVLTHMYPFAKGLMGRRGKVPTIVYVWSGLVSITVSLLWITISPPDDVSGSGGISV</sequence>
<evidence type="ECO:0000255" key="1"/>
<evidence type="ECO:0000256" key="2">
    <source>
        <dbReference type="SAM" id="MobiDB-lite"/>
    </source>
</evidence>
<evidence type="ECO:0000305" key="3"/>